<evidence type="ECO:0000250" key="1"/>
<evidence type="ECO:0000255" key="2">
    <source>
        <dbReference type="HAMAP-Rule" id="MF_00403"/>
    </source>
</evidence>
<evidence type="ECO:0000305" key="3"/>
<reference key="1">
    <citation type="journal article" date="2007" name="BMC Genomics">
        <title>Rapid evolutionary change of common bean (Phaseolus vulgaris L) plastome, and the genomic diversification of legume chloroplasts.</title>
        <authorList>
            <person name="Guo X."/>
            <person name="Castillo-Ramirez S."/>
            <person name="Gonzalez V."/>
            <person name="Bustos P."/>
            <person name="Fernandez-Vazquez J.L."/>
            <person name="Santamaria R.I."/>
            <person name="Arellano J."/>
            <person name="Cevallos M.A."/>
            <person name="Davila G."/>
        </authorList>
    </citation>
    <scope>NUCLEOTIDE SEQUENCE [LARGE SCALE GENOMIC DNA]</scope>
    <source>
        <strain>cv. Negro Jamapa</strain>
    </source>
</reference>
<reference key="2">
    <citation type="submission" date="2007-10" db="EMBL/GenBank/DDBJ databases">
        <title>Complete nucleotide sequence of the plastid genome of the common bean, Phaseolus vulgaris.</title>
        <authorList>
            <person name="Moore M.J."/>
            <person name="Triplett E.W."/>
            <person name="Broughton W.J."/>
            <person name="Soltis P.S."/>
            <person name="Soltis D.E."/>
        </authorList>
    </citation>
    <scope>NUCLEOTIDE SEQUENCE [LARGE SCALE GENOMIC DNA]</scope>
</reference>
<keyword id="KW-0150">Chloroplast</keyword>
<keyword id="KW-0934">Plastid</keyword>
<keyword id="KW-0687">Ribonucleoprotein</keyword>
<keyword id="KW-0689">Ribosomal protein</keyword>
<keyword id="KW-0694">RNA-binding</keyword>
<keyword id="KW-0699">rRNA-binding</keyword>
<proteinExistence type="inferred from homology"/>
<dbReference type="EMBL" id="DQ886273">
    <property type="protein sequence ID" value="ABH88137.1"/>
    <property type="molecule type" value="Genomic_DNA"/>
</dbReference>
<dbReference type="EMBL" id="DQ886273">
    <property type="protein sequence ID" value="ABP58678.1"/>
    <property type="molecule type" value="Genomic_DNA"/>
</dbReference>
<dbReference type="EMBL" id="EU196765">
    <property type="protein sequence ID" value="ABW22747.1"/>
    <property type="molecule type" value="Genomic_DNA"/>
</dbReference>
<dbReference type="EMBL" id="EU196765">
    <property type="protein sequence ID" value="ABW22748.1"/>
    <property type="molecule type" value="Genomic_DNA"/>
</dbReference>
<dbReference type="SMR" id="A4GGC9"/>
<dbReference type="KEGG" id="pvu:4961773"/>
<dbReference type="KEGG" id="pvu:5075332"/>
<dbReference type="eggNOG" id="KOG1750">
    <property type="taxonomic scope" value="Eukaryota"/>
</dbReference>
<dbReference type="GO" id="GO:0009507">
    <property type="term" value="C:chloroplast"/>
    <property type="evidence" value="ECO:0007669"/>
    <property type="project" value="UniProtKB-SubCell"/>
</dbReference>
<dbReference type="GO" id="GO:0015935">
    <property type="term" value="C:small ribosomal subunit"/>
    <property type="evidence" value="ECO:0007669"/>
    <property type="project" value="InterPro"/>
</dbReference>
<dbReference type="GO" id="GO:0019843">
    <property type="term" value="F:rRNA binding"/>
    <property type="evidence" value="ECO:0007669"/>
    <property type="project" value="UniProtKB-UniRule"/>
</dbReference>
<dbReference type="GO" id="GO:0003735">
    <property type="term" value="F:structural constituent of ribosome"/>
    <property type="evidence" value="ECO:0007669"/>
    <property type="project" value="InterPro"/>
</dbReference>
<dbReference type="GO" id="GO:0006412">
    <property type="term" value="P:translation"/>
    <property type="evidence" value="ECO:0007669"/>
    <property type="project" value="UniProtKB-UniRule"/>
</dbReference>
<dbReference type="CDD" id="cd03368">
    <property type="entry name" value="Ribosomal_S12"/>
    <property type="match status" value="1"/>
</dbReference>
<dbReference type="FunFam" id="2.40.50.140:FF:000008">
    <property type="entry name" value="30S ribosomal protein S12, chloroplastic"/>
    <property type="match status" value="1"/>
</dbReference>
<dbReference type="Gene3D" id="2.40.50.140">
    <property type="entry name" value="Nucleic acid-binding proteins"/>
    <property type="match status" value="1"/>
</dbReference>
<dbReference type="HAMAP" id="MF_00403_B">
    <property type="entry name" value="Ribosomal_uS12_B"/>
    <property type="match status" value="1"/>
</dbReference>
<dbReference type="InterPro" id="IPR012340">
    <property type="entry name" value="NA-bd_OB-fold"/>
</dbReference>
<dbReference type="InterPro" id="IPR006032">
    <property type="entry name" value="Ribosomal_uS12"/>
</dbReference>
<dbReference type="InterPro" id="IPR005679">
    <property type="entry name" value="Ribosomal_uS12_bac"/>
</dbReference>
<dbReference type="NCBIfam" id="TIGR00981">
    <property type="entry name" value="rpsL_bact"/>
    <property type="match status" value="1"/>
</dbReference>
<dbReference type="PANTHER" id="PTHR11652">
    <property type="entry name" value="30S RIBOSOMAL PROTEIN S12 FAMILY MEMBER"/>
    <property type="match status" value="1"/>
</dbReference>
<dbReference type="Pfam" id="PF00164">
    <property type="entry name" value="Ribosom_S12_S23"/>
    <property type="match status" value="1"/>
</dbReference>
<dbReference type="PIRSF" id="PIRSF002133">
    <property type="entry name" value="Ribosomal_S12/S23"/>
    <property type="match status" value="1"/>
</dbReference>
<dbReference type="PRINTS" id="PR01034">
    <property type="entry name" value="RIBOSOMALS12"/>
</dbReference>
<dbReference type="SUPFAM" id="SSF50249">
    <property type="entry name" value="Nucleic acid-binding proteins"/>
    <property type="match status" value="1"/>
</dbReference>
<dbReference type="PROSITE" id="PS00055">
    <property type="entry name" value="RIBOSOMAL_S12"/>
    <property type="match status" value="1"/>
</dbReference>
<geneLocation type="chloroplast"/>
<name>RR12_PHAVU</name>
<protein>
    <recommendedName>
        <fullName evidence="2">Small ribosomal subunit protein uS12cz/uS12cy</fullName>
    </recommendedName>
    <alternativeName>
        <fullName evidence="3">30S ribosomal protein S12, chloroplastic</fullName>
    </alternativeName>
</protein>
<feature type="chain" id="PRO_0000296076" description="Small ribosomal subunit protein uS12cz/uS12cy">
    <location>
        <begin position="1"/>
        <end position="123"/>
    </location>
</feature>
<sequence length="123" mass="13726">MPTMKQLIRNTRQPIRNVTKSPALQGCPQRRGTCTRVYTITPKKPNSALRKVARVRLTSGFEITAYIPGIGHNLQEHSVVLVRGGRVKDLPGVRYHIVRGTLDAVGVKDRQQGRSKYGAKKPK</sequence>
<organism>
    <name type="scientific">Phaseolus vulgaris</name>
    <name type="common">Kidney bean</name>
    <name type="synonym">French bean</name>
    <dbReference type="NCBI Taxonomy" id="3885"/>
    <lineage>
        <taxon>Eukaryota</taxon>
        <taxon>Viridiplantae</taxon>
        <taxon>Streptophyta</taxon>
        <taxon>Embryophyta</taxon>
        <taxon>Tracheophyta</taxon>
        <taxon>Spermatophyta</taxon>
        <taxon>Magnoliopsida</taxon>
        <taxon>eudicotyledons</taxon>
        <taxon>Gunneridae</taxon>
        <taxon>Pentapetalae</taxon>
        <taxon>rosids</taxon>
        <taxon>fabids</taxon>
        <taxon>Fabales</taxon>
        <taxon>Fabaceae</taxon>
        <taxon>Papilionoideae</taxon>
        <taxon>50 kb inversion clade</taxon>
        <taxon>NPAAA clade</taxon>
        <taxon>indigoferoid/millettioid clade</taxon>
        <taxon>Phaseoleae</taxon>
        <taxon>Phaseolus</taxon>
    </lineage>
</organism>
<comment type="function">
    <text evidence="1">With S4 and S5 plays an important role in translational accuracy. Located at the interface of the 30S and 50S subunits (By similarity).</text>
</comment>
<comment type="subunit">
    <text evidence="1">Part of the 30S ribosomal subunit.</text>
</comment>
<comment type="subcellular location">
    <subcellularLocation>
        <location>Plastid</location>
        <location>Chloroplast</location>
    </subcellularLocation>
</comment>
<comment type="similarity">
    <text evidence="3">Belongs to the universal ribosomal protein uS12 family.</text>
</comment>
<accession>A4GGC9</accession>
<accession>A8W7Y8</accession>
<gene>
    <name type="primary">rps12-A</name>
</gene>
<gene>
    <name type="primary">rps12-B</name>
</gene>